<name>AKT2_CAEEL</name>
<feature type="chain" id="PRO_0000085616" description="Serine/threonine-protein kinase akt-2">
    <location>
        <begin position="1"/>
        <end position="528"/>
    </location>
</feature>
<feature type="domain" description="PH" evidence="1">
    <location>
        <begin position="12"/>
        <end position="115"/>
    </location>
</feature>
<feature type="domain" description="Protein kinase" evidence="2">
    <location>
        <begin position="180"/>
        <end position="437"/>
    </location>
</feature>
<feature type="domain" description="AGC-kinase C-terminal" evidence="3">
    <location>
        <begin position="438"/>
        <end position="515"/>
    </location>
</feature>
<feature type="region of interest" description="Disordered" evidence="5">
    <location>
        <begin position="121"/>
        <end position="153"/>
    </location>
</feature>
<feature type="compositionally biased region" description="Polar residues" evidence="5">
    <location>
        <begin position="123"/>
        <end position="153"/>
    </location>
</feature>
<feature type="active site" description="Proton acceptor" evidence="2 4">
    <location>
        <position position="303"/>
    </location>
</feature>
<feature type="binding site" evidence="2">
    <location>
        <begin position="186"/>
        <end position="194"/>
    </location>
    <ligand>
        <name>ATP</name>
        <dbReference type="ChEBI" id="CHEBI:30616"/>
    </ligand>
</feature>
<feature type="binding site" evidence="2">
    <location>
        <position position="209"/>
    </location>
    <ligand>
        <name>ATP</name>
        <dbReference type="ChEBI" id="CHEBI:30616"/>
    </ligand>
</feature>
<feature type="splice variant" id="VSP_017047" description="In isoform b." evidence="15">
    <original>EFTSMPVQLTPPRR</original>
    <variation>VRYVSILLKVSEAI</variation>
    <location>
        <begin position="470"/>
        <end position="483"/>
    </location>
</feature>
<feature type="splice variant" id="VSP_017048" description="In isoform b." evidence="15">
    <location>
        <begin position="484"/>
        <end position="528"/>
    </location>
</feature>
<feature type="mutagenesis site" description="Probable loss of kinase activity. Increased apoptosis during embryonic development in an akt-1 tm399 mutant background." evidence="13">
    <original>K</original>
    <variation>M</variation>
    <location>
        <position position="209"/>
    </location>
</feature>
<reference key="1">
    <citation type="journal article" date="1998" name="Genes Dev.">
        <title>Caenorhabditis elegans Akt/PKB transduces insulin receptor-like signals from AGE-1 PI3 kinase to the DAF-16 transcription factor.</title>
        <authorList>
            <person name="Paradis S."/>
            <person name="Ruvkun G."/>
        </authorList>
    </citation>
    <scope>NUCLEOTIDE SEQUENCE [MRNA] (ISOFORM B)</scope>
    <scope>FUNCTION</scope>
    <scope>TISSUE SPECIFICITY</scope>
    <scope>DEVELOPMENTAL STAGE</scope>
</reference>
<reference key="2">
    <citation type="journal article" date="1998" name="Science">
        <title>Genome sequence of the nematode C. elegans: a platform for investigating biology.</title>
        <authorList>
            <consortium name="The C. elegans sequencing consortium"/>
        </authorList>
    </citation>
    <scope>NUCLEOTIDE SEQUENCE [LARGE SCALE GENOMIC DNA]</scope>
    <scope>ALTERNATIVE SPLICING</scope>
    <source>
        <strain>Bristol N2</strain>
    </source>
</reference>
<reference key="3">
    <citation type="journal article" date="1999" name="Genes Dev.">
        <title>A PDK1 homolog is necessary and sufficient to transduce AGE-1 PI3 kinase signals that regulate diapause in Caenorhabditis elegans.</title>
        <authorList>
            <person name="Paradis S."/>
            <person name="Ailion M."/>
            <person name="Toker A."/>
            <person name="Thomas J.H."/>
            <person name="Ruvkun G."/>
        </authorList>
    </citation>
    <scope>FUNCTION</scope>
</reference>
<reference key="4">
    <citation type="journal article" date="2001" name="Curr. Biol.">
        <title>daf-16 integrates developmental and environmental inputs to mediate aging in the nematode Caenorhabditis elegans.</title>
        <authorList>
            <person name="Henderson S.T."/>
            <person name="Johnson T.E."/>
        </authorList>
    </citation>
    <scope>FUNCTION</scope>
</reference>
<reference key="5">
    <citation type="journal article" date="2001" name="Nat. Genet.">
        <title>Regulation of the Caenorhabditis elegans longevity protein DAF-16 by insulin/IGF-1 and germline signaling.</title>
        <authorList>
            <person name="Lin K."/>
            <person name="Hsin H."/>
            <person name="Libina N."/>
            <person name="Kenyon C."/>
        </authorList>
    </citation>
    <scope>FUNCTION</scope>
</reference>
<reference key="6">
    <citation type="journal article" date="2008" name="Aging Cell">
        <title>The DAF-2 insulin-like signaling pathway independently regulates aging and immunity in C. elegans.</title>
        <authorList>
            <person name="Evans E.A."/>
            <person name="Chen W.C."/>
            <person name="Tan M.-W."/>
        </authorList>
    </citation>
    <scope>FUNCTION</scope>
    <scope>DISRUPTION PHENOTYPE</scope>
</reference>
<reference key="7">
    <citation type="journal article" date="2008" name="Cell">
        <title>Direct inhibition of the longevity-promoting factor SKN-1 by insulin-like signaling in C. elegans.</title>
        <authorList>
            <person name="Tullet J.M."/>
            <person name="Hertweck M."/>
            <person name="An J.H."/>
            <person name="Baker J."/>
            <person name="Hwang J.Y."/>
            <person name="Liu S."/>
            <person name="Oliveira R.P."/>
            <person name="Baumeister R."/>
            <person name="Blackwell T.K."/>
        </authorList>
    </citation>
    <scope>FUNCTION</scope>
</reference>
<reference key="8">
    <citation type="journal article" date="2004" name="Dev. Cell">
        <title>C. elegans SGK-1 is the critical component in the Akt/PKB kinase complex to control stress response and life span.</title>
        <authorList>
            <person name="Hertweck M."/>
            <person name="Goebel C."/>
            <person name="Baumeister R."/>
        </authorList>
    </citation>
    <scope>FUNCTION</scope>
    <scope>ACTIVITY REGULATION</scope>
    <scope>INTERACTION WITH PDK-1; SGK-1; AKT-1 AND DAF-16</scope>
    <scope>DISRUPTION PHENOTYPE</scope>
</reference>
<reference key="9">
    <citation type="journal article" date="2012" name="PLoS Genet.">
        <title>Cell-nonautonomous signaling of FOXO/DAF-16 to the stem cells of Caenorhabditis elegans.</title>
        <authorList>
            <person name="Qi W."/>
            <person name="Huang X."/>
            <person name="Neumann-Haefelin E."/>
            <person name="Schulze E."/>
            <person name="Baumeister R."/>
        </authorList>
    </citation>
    <scope>FUNCTION</scope>
</reference>
<reference key="10">
    <citation type="journal article" date="2014" name="Nat. Struct. Mol. Biol.">
        <title>Caspase-activated phosphoinositide binding by CNT-1 promotes apoptosis by inhibiting the AKT pathway.</title>
        <authorList>
            <person name="Nakagawa A."/>
            <person name="Sullivan K.D."/>
            <person name="Xue D."/>
        </authorList>
    </citation>
    <scope>FUNCTION</scope>
    <scope>DOMAIN</scope>
    <scope>MUTAGENESIS OF LYS-209</scope>
</reference>
<proteinExistence type="evidence at protein level"/>
<protein>
    <recommendedName>
        <fullName>Serine/threonine-protein kinase akt-2</fullName>
        <ecNumber>2.7.11.1</ecNumber>
    </recommendedName>
    <alternativeName>
        <fullName>Protein kinase B akt-2</fullName>
        <shortName>PKB akt-2</shortName>
    </alternativeName>
</protein>
<sequence length="528" mass="61058">MSTENAHLQKEDIVIESWLHKKGEHIRNWRPRYFILFRDGTLLGFRSKPKEDQPLPEPLNNFMIRDAATVCLDKPRPNMFIVRCLQWTTVIERTFYADSADFRQMWIEAIQAVSSHNRLKENAGNTSMQEEDTNGNPSGESDVNMDATSTRSDNDFESTVMNIDEPEEVPRKNTVTMDDFDFLKVLGQGTFGKVILCREKSSDKLYAIKIIRKEMVVDRSEVAHTLTENRVLYACVHPFLTLLKYSFQAQYHICFVMEFANGGELFTHLQRCKTFSEARTRFYGSEIILALGYLHHRNIVYRDMKLENLLLDRDGHIKITDFGLCKEEIKYGDKTSTFCGTPEYLAPEVIEDIDYDRSVDWWGVGVVMYEMMCGRLPFSAKENGKLFELITTCDLKFPNRLSPEAVTLLSGLLERVPAKRLGAGPDDAREVSRAEFFKDVDWEATLRKEVEPPFKPNVMSETDTSFFDREFTSMPVQLTPPRRGEELPTVDEEEELQANFIQFASYYVSGSLERSYDTNRSADKYEIR</sequence>
<accession>Q9XTG7</accession>
<accession>O77145</accession>
<gene>
    <name evidence="17" type="primary">akt-2</name>
    <name evidence="17" type="ORF">F28H6.1</name>
</gene>
<comment type="function">
    <text evidence="6 7 8 9 10 11 12 13 14">Acts downstream of PI3 kinase age-1 and kinase pdk-1 in the daf-2/insulin receptor-like transduction pathway (PubMed:10364160, PubMed:11381260, PubMed:11747825, PubMed:15068796, PubMed:18782349, PubMed:22916022, PubMed:9716402). Essential role in regulating developmental arrest at the dauer stage (PubMed:10364160). Phosphorylates Forkhead-related daf-16 and the longevity-promoting skn-1 transcription factors, which inhibits their entry into the nucleus and antagonizes their functions (PubMed:11381260, PubMed:11747825, PubMed:15068796, PubMed:18358814). Role in immune function and pathogen resistance (PubMed:18782349). Downstream of age-1 and together with akt-1 and sgk-1, promotes cell survival during embryonic development (PubMed:25383666). Plays a role in maintaining the gonadal basement membrane through antagonizing akt-1 activity (PubMed:22916022).</text>
</comment>
<comment type="catalytic activity">
    <reaction>
        <text>L-seryl-[protein] + ATP = O-phospho-L-seryl-[protein] + ADP + H(+)</text>
        <dbReference type="Rhea" id="RHEA:17989"/>
        <dbReference type="Rhea" id="RHEA-COMP:9863"/>
        <dbReference type="Rhea" id="RHEA-COMP:11604"/>
        <dbReference type="ChEBI" id="CHEBI:15378"/>
        <dbReference type="ChEBI" id="CHEBI:29999"/>
        <dbReference type="ChEBI" id="CHEBI:30616"/>
        <dbReference type="ChEBI" id="CHEBI:83421"/>
        <dbReference type="ChEBI" id="CHEBI:456216"/>
        <dbReference type="EC" id="2.7.11.1"/>
    </reaction>
</comment>
<comment type="catalytic activity">
    <reaction>
        <text>L-threonyl-[protein] + ATP = O-phospho-L-threonyl-[protein] + ADP + H(+)</text>
        <dbReference type="Rhea" id="RHEA:46608"/>
        <dbReference type="Rhea" id="RHEA-COMP:11060"/>
        <dbReference type="Rhea" id="RHEA-COMP:11605"/>
        <dbReference type="ChEBI" id="CHEBI:15378"/>
        <dbReference type="ChEBI" id="CHEBI:30013"/>
        <dbReference type="ChEBI" id="CHEBI:30616"/>
        <dbReference type="ChEBI" id="CHEBI:61977"/>
        <dbReference type="ChEBI" id="CHEBI:456216"/>
        <dbReference type="EC" id="2.7.11.1"/>
    </reaction>
</comment>
<comment type="cofactor">
    <cofactor>
        <name>Mg(2+)</name>
        <dbReference type="ChEBI" id="CHEBI:18420"/>
    </cofactor>
</comment>
<comment type="activity regulation">
    <text evidence="9">Phosphorylated and activated by pdk-1.</text>
</comment>
<comment type="subunit">
    <text evidence="9">Interacts with pdk-1, sgk-1, akt-1 and daf-16. Part of a complex containing sgk-1, akt-1 and akt-2.</text>
</comment>
<comment type="interaction">
    <interactant intactId="EBI-320656">
        <id>Q9XTG7</id>
    </interactant>
    <interactant intactId="EBI-1770718">
        <id>Q17941</id>
        <label>akt-1</label>
    </interactant>
    <organismsDiffer>false</organismsDiffer>
    <experiments>2</experiments>
</comment>
<comment type="interaction">
    <interactant intactId="EBI-320656">
        <id>Q9XTG7</id>
    </interactant>
    <interactant intactId="EBI-324028">
        <id>O16850</id>
        <label>daf-16</label>
    </interactant>
    <organismsDiffer>false</organismsDiffer>
    <experiments>3</experiments>
</comment>
<comment type="interaction">
    <interactant intactId="EBI-320656">
        <id>Q9XTG7</id>
    </interactant>
    <interactant intactId="EBI-1770776">
        <id>Q2PJ68</id>
        <label>sgk-1</label>
    </interactant>
    <organismsDiffer>false</organismsDiffer>
    <experiments>3</experiments>
</comment>
<comment type="alternative products">
    <event type="alternative splicing"/>
    <isoform>
        <id>Q9XTG7-1</id>
        <name evidence="17">a</name>
        <sequence type="displayed"/>
    </isoform>
    <isoform>
        <id>Q9XTG7-2</id>
        <name evidence="18">b</name>
        <sequence type="described" ref="VSP_017047 VSP_017048"/>
    </isoform>
</comment>
<comment type="tissue specificity">
    <text evidence="14">Expressed in neurons, muscle cells of the pharynx, rectal gland cells, and spermatheca.</text>
</comment>
<comment type="developmental stage">
    <text evidence="14">Expressed in late stage embryos and throughout life.</text>
</comment>
<comment type="domain">
    <text evidence="13">The PH domain binds to phosphatidylinositol 3,4,5-trisphosphate (PtdIns(3,4,5)P3) resulting in its targeting to the plasma membrane.</text>
</comment>
<comment type="disruption phenotype">
    <text evidence="9 11">Defective egg-laying and increased resistance to pathogens. Simultaneous knockdown of akt-1 and akt-2 result in dauer formation and a weak extension to life span.</text>
</comment>
<comment type="similarity">
    <text evidence="16">Belongs to the protein kinase superfamily. AGC Ser/Thr protein kinase family. RAC subfamily.</text>
</comment>
<dbReference type="EC" id="2.7.11.1"/>
<dbReference type="EMBL" id="AF072381">
    <property type="protein sequence ID" value="AAC62468.1"/>
    <property type="molecule type" value="mRNA"/>
</dbReference>
<dbReference type="EMBL" id="BX284606">
    <property type="protein sequence ID" value="CAA20936.1"/>
    <property type="molecule type" value="Genomic_DNA"/>
</dbReference>
<dbReference type="EMBL" id="Z92837">
    <property type="protein sequence ID" value="CAA20936.1"/>
    <property type="status" value="JOINED"/>
    <property type="molecule type" value="Genomic_DNA"/>
</dbReference>
<dbReference type="EMBL" id="BX284606">
    <property type="protein sequence ID" value="CAC70087.1"/>
    <property type="molecule type" value="Genomic_DNA"/>
</dbReference>
<dbReference type="EMBL" id="Z92837">
    <property type="protein sequence ID" value="CAC70087.1"/>
    <property type="status" value="JOINED"/>
    <property type="molecule type" value="Genomic_DNA"/>
</dbReference>
<dbReference type="PIR" id="T21523">
    <property type="entry name" value="T21523"/>
</dbReference>
<dbReference type="PIR" id="T43234">
    <property type="entry name" value="T43234"/>
</dbReference>
<dbReference type="RefSeq" id="NP_001024612.1">
    <molecule id="Q9XTG7-2"/>
    <property type="nucleotide sequence ID" value="NM_001029441.4"/>
</dbReference>
<dbReference type="RefSeq" id="NP_510357.3">
    <molecule id="Q9XTG7-1"/>
    <property type="nucleotide sequence ID" value="NM_077956.5"/>
</dbReference>
<dbReference type="SMR" id="Q9XTG7"/>
<dbReference type="BioGRID" id="46423">
    <property type="interactions" value="13"/>
</dbReference>
<dbReference type="ComplexPortal" id="CPX-1129">
    <property type="entry name" value="Atk-1/Akt-2/Sgk-1 protein kinase complex"/>
</dbReference>
<dbReference type="DIP" id="DIP-26368N"/>
<dbReference type="FunCoup" id="Q9XTG7">
    <property type="interactions" value="2505"/>
</dbReference>
<dbReference type="IntAct" id="Q9XTG7">
    <property type="interactions" value="8"/>
</dbReference>
<dbReference type="STRING" id="6239.F28H6.1a.1"/>
<dbReference type="iPTMnet" id="Q9XTG7"/>
<dbReference type="PaxDb" id="6239-F28H6.1a"/>
<dbReference type="PeptideAtlas" id="Q9XTG7"/>
<dbReference type="EnsemblMetazoa" id="F28H6.1a.1">
    <molecule id="Q9XTG7-1"/>
    <property type="protein sequence ID" value="F28H6.1a.1"/>
    <property type="gene ID" value="WBGene00000103"/>
</dbReference>
<dbReference type="EnsemblMetazoa" id="F28H6.1b.1">
    <molecule id="Q9XTG7-2"/>
    <property type="protein sequence ID" value="F28H6.1b.1"/>
    <property type="gene ID" value="WBGene00000103"/>
</dbReference>
<dbReference type="GeneID" id="181524"/>
<dbReference type="KEGG" id="cel:CELE_F28H6.1"/>
<dbReference type="UCSC" id="F28H6.1b">
    <molecule id="Q9XTG7-1"/>
    <property type="organism name" value="c. elegans"/>
</dbReference>
<dbReference type="AGR" id="WB:WBGene00000103"/>
<dbReference type="CTD" id="181524"/>
<dbReference type="WormBase" id="F28H6.1a">
    <molecule id="Q9XTG7-1"/>
    <property type="protein sequence ID" value="CE18646"/>
    <property type="gene ID" value="WBGene00000103"/>
    <property type="gene designation" value="akt-2"/>
</dbReference>
<dbReference type="WormBase" id="F28H6.1b">
    <molecule id="Q9XTG7-2"/>
    <property type="protein sequence ID" value="CE29298"/>
    <property type="gene ID" value="WBGene00000103"/>
    <property type="gene designation" value="akt-2"/>
</dbReference>
<dbReference type="eggNOG" id="KOG0690">
    <property type="taxonomic scope" value="Eukaryota"/>
</dbReference>
<dbReference type="GeneTree" id="ENSGT00940000168810"/>
<dbReference type="HOGENOM" id="CLU_000288_11_2_1"/>
<dbReference type="InParanoid" id="Q9XTG7"/>
<dbReference type="OMA" id="HKMTKQY"/>
<dbReference type="OrthoDB" id="63267at2759"/>
<dbReference type="PhylomeDB" id="Q9XTG7"/>
<dbReference type="Reactome" id="R-CEL-1257604">
    <property type="pathway name" value="PIP3 activates AKT signaling"/>
</dbReference>
<dbReference type="Reactome" id="R-CEL-1474151">
    <property type="pathway name" value="Tetrahydrobiopterin (BH4) synthesis, recycling, salvage and regulation"/>
</dbReference>
<dbReference type="Reactome" id="R-CEL-165158">
    <property type="pathway name" value="Activation of AKT2"/>
</dbReference>
<dbReference type="Reactome" id="R-CEL-165159">
    <property type="pathway name" value="MTOR signalling"/>
</dbReference>
<dbReference type="Reactome" id="R-CEL-198323">
    <property type="pathway name" value="AKT phosphorylates targets in the cytosol"/>
</dbReference>
<dbReference type="Reactome" id="R-CEL-198693">
    <property type="pathway name" value="AKT phosphorylates targets in the nucleus"/>
</dbReference>
<dbReference type="Reactome" id="R-CEL-199418">
    <property type="pathway name" value="Negative regulation of the PI3K/AKT network"/>
</dbReference>
<dbReference type="Reactome" id="R-CEL-203615">
    <property type="pathway name" value="eNOS activation"/>
</dbReference>
<dbReference type="Reactome" id="R-CEL-211163">
    <property type="pathway name" value="AKT-mediated inactivation of FOXO1A"/>
</dbReference>
<dbReference type="Reactome" id="R-CEL-354192">
    <property type="pathway name" value="Integrin signaling"/>
</dbReference>
<dbReference type="Reactome" id="R-CEL-389357">
    <property type="pathway name" value="CD28 dependent PI3K/Akt signaling"/>
</dbReference>
<dbReference type="Reactome" id="R-CEL-389513">
    <property type="pathway name" value="Co-inhibition by CTLA4"/>
</dbReference>
<dbReference type="Reactome" id="R-CEL-392451">
    <property type="pathway name" value="G beta:gamma signalling through PI3Kgamma"/>
</dbReference>
<dbReference type="Reactome" id="R-CEL-450385">
    <property type="pathway name" value="Butyrate Response Factor 1 (BRF1) binds and destabilizes mRNA"/>
</dbReference>
<dbReference type="Reactome" id="R-CEL-450604">
    <property type="pathway name" value="KSRP (KHSRP) binds and destabilizes mRNA"/>
</dbReference>
<dbReference type="Reactome" id="R-CEL-5218920">
    <property type="pathway name" value="VEGFR2 mediated vascular permeability"/>
</dbReference>
<dbReference type="Reactome" id="R-CEL-6804758">
    <property type="pathway name" value="Regulation of TP53 Activity through Acetylation"/>
</dbReference>
<dbReference type="Reactome" id="R-CEL-6811558">
    <property type="pathway name" value="PI5P, PP2A and IER3 Regulate PI3K/AKT Signaling"/>
</dbReference>
<dbReference type="Reactome" id="R-CEL-69202">
    <property type="pathway name" value="Cyclin E associated events during G1/S transition"/>
</dbReference>
<dbReference type="Reactome" id="R-CEL-69656">
    <property type="pathway name" value="Cyclin A:Cdk2-associated events at S phase entry"/>
</dbReference>
<dbReference type="Reactome" id="R-CEL-8849469">
    <property type="pathway name" value="PTK6 Regulates RTKs and Their Effectors AKT1 and DOK1"/>
</dbReference>
<dbReference type="Reactome" id="R-CEL-8876198">
    <property type="pathway name" value="RAB GEFs exchange GTP for GDP on RABs"/>
</dbReference>
<dbReference type="Reactome" id="R-CEL-8948751">
    <property type="pathway name" value="Regulation of PTEN stability and activity"/>
</dbReference>
<dbReference type="Reactome" id="R-CEL-9009391">
    <property type="pathway name" value="Extra-nuclear estrogen signaling"/>
</dbReference>
<dbReference type="Reactome" id="R-CEL-9604323">
    <property type="pathway name" value="Negative regulation of NOTCH4 signaling"/>
</dbReference>
<dbReference type="Reactome" id="R-CEL-9607240">
    <property type="pathway name" value="FLT3 Signaling"/>
</dbReference>
<dbReference type="Reactome" id="R-CEL-9614399">
    <property type="pathway name" value="Regulation of localization of FOXO transcription factors"/>
</dbReference>
<dbReference type="Reactome" id="R-CEL-9634638">
    <property type="pathway name" value="Estrogen-dependent nuclear events downstream of ESR-membrane signaling"/>
</dbReference>
<dbReference type="Reactome" id="R-CEL-9755511">
    <property type="pathway name" value="KEAP1-NFE2L2 pathway"/>
</dbReference>
<dbReference type="Reactome" id="R-CEL-9841251">
    <property type="pathway name" value="Mitochondrial unfolded protein response (UPRmt)"/>
</dbReference>
<dbReference type="Reactome" id="R-CEL-9856530">
    <property type="pathway name" value="High laminar flow shear stress activates signaling by PIEZO1 and PECAM1:CDH5:KDR in endothelial cells"/>
</dbReference>
<dbReference type="SignaLink" id="Q9XTG7"/>
<dbReference type="PRO" id="PR:Q9XTG7"/>
<dbReference type="Proteomes" id="UP000001940">
    <property type="component" value="Chromosome X"/>
</dbReference>
<dbReference type="Bgee" id="WBGene00000103">
    <property type="expression patterns" value="Expressed in pharyngeal muscle cell (C elegans) and 4 other cell types or tissues"/>
</dbReference>
<dbReference type="GO" id="GO:1902911">
    <property type="term" value="C:protein kinase complex"/>
    <property type="evidence" value="ECO:0000353"/>
    <property type="project" value="ComplexPortal"/>
</dbReference>
<dbReference type="GO" id="GO:0005524">
    <property type="term" value="F:ATP binding"/>
    <property type="evidence" value="ECO:0007669"/>
    <property type="project" value="UniProtKB-KW"/>
</dbReference>
<dbReference type="GO" id="GO:0046872">
    <property type="term" value="F:metal ion binding"/>
    <property type="evidence" value="ECO:0007669"/>
    <property type="project" value="UniProtKB-KW"/>
</dbReference>
<dbReference type="GO" id="GO:0005547">
    <property type="term" value="F:phosphatidylinositol-3,4,5-trisphosphate binding"/>
    <property type="evidence" value="ECO:0000314"/>
    <property type="project" value="WormBase"/>
</dbReference>
<dbReference type="GO" id="GO:0106310">
    <property type="term" value="F:protein serine kinase activity"/>
    <property type="evidence" value="ECO:0007669"/>
    <property type="project" value="RHEA"/>
</dbReference>
<dbReference type="GO" id="GO:0004674">
    <property type="term" value="F:protein serine/threonine kinase activity"/>
    <property type="evidence" value="ECO:0000314"/>
    <property type="project" value="WormBase"/>
</dbReference>
<dbReference type="GO" id="GO:0008340">
    <property type="term" value="P:determination of adult lifespan"/>
    <property type="evidence" value="ECO:0000315"/>
    <property type="project" value="WormBase"/>
</dbReference>
<dbReference type="GO" id="GO:0045087">
    <property type="term" value="P:innate immune response"/>
    <property type="evidence" value="ECO:0007669"/>
    <property type="project" value="UniProtKB-KW"/>
</dbReference>
<dbReference type="GO" id="GO:0008286">
    <property type="term" value="P:insulin receptor signaling pathway"/>
    <property type="evidence" value="ECO:0000315"/>
    <property type="project" value="WormBase"/>
</dbReference>
<dbReference type="GO" id="GO:0035556">
    <property type="term" value="P:intracellular signal transduction"/>
    <property type="evidence" value="ECO:0000318"/>
    <property type="project" value="GO_Central"/>
</dbReference>
<dbReference type="GO" id="GO:0010468">
    <property type="term" value="P:regulation of gene expression"/>
    <property type="evidence" value="ECO:0000314"/>
    <property type="project" value="ComplexPortal"/>
</dbReference>
<dbReference type="GO" id="GO:0008582">
    <property type="term" value="P:regulation of synaptic assembly at neuromuscular junction"/>
    <property type="evidence" value="ECO:0000316"/>
    <property type="project" value="UniProtKB"/>
</dbReference>
<dbReference type="CDD" id="cd01241">
    <property type="entry name" value="PH_PKB"/>
    <property type="match status" value="1"/>
</dbReference>
<dbReference type="FunFam" id="1.10.510.10:FF:000033">
    <property type="entry name" value="Non-specific serine/threonine protein kinase"/>
    <property type="match status" value="1"/>
</dbReference>
<dbReference type="FunFam" id="2.30.29.30:FF:000404">
    <property type="entry name" value="Non-specific serine/threonine protein kinase"/>
    <property type="match status" value="1"/>
</dbReference>
<dbReference type="FunFam" id="3.30.200.20:FF:001053">
    <property type="entry name" value="Non-specific serine/threonine protein kinase"/>
    <property type="match status" value="1"/>
</dbReference>
<dbReference type="Gene3D" id="3.30.200.20">
    <property type="entry name" value="Phosphorylase Kinase, domain 1"/>
    <property type="match status" value="1"/>
</dbReference>
<dbReference type="Gene3D" id="2.30.29.30">
    <property type="entry name" value="Pleckstrin-homology domain (PH domain)/Phosphotyrosine-binding domain (PTB)"/>
    <property type="match status" value="1"/>
</dbReference>
<dbReference type="Gene3D" id="1.10.510.10">
    <property type="entry name" value="Transferase(Phosphotransferase) domain 1"/>
    <property type="match status" value="1"/>
</dbReference>
<dbReference type="InterPro" id="IPR000961">
    <property type="entry name" value="AGC-kinase_C"/>
</dbReference>
<dbReference type="InterPro" id="IPR011009">
    <property type="entry name" value="Kinase-like_dom_sf"/>
</dbReference>
<dbReference type="InterPro" id="IPR011993">
    <property type="entry name" value="PH-like_dom_sf"/>
</dbReference>
<dbReference type="InterPro" id="IPR001849">
    <property type="entry name" value="PH_domain"/>
</dbReference>
<dbReference type="InterPro" id="IPR039026">
    <property type="entry name" value="PH_PKB"/>
</dbReference>
<dbReference type="InterPro" id="IPR017892">
    <property type="entry name" value="Pkinase_C"/>
</dbReference>
<dbReference type="InterPro" id="IPR000719">
    <property type="entry name" value="Prot_kinase_dom"/>
</dbReference>
<dbReference type="InterPro" id="IPR017441">
    <property type="entry name" value="Protein_kinase_ATP_BS"/>
</dbReference>
<dbReference type="InterPro" id="IPR008271">
    <property type="entry name" value="Ser/Thr_kinase_AS"/>
</dbReference>
<dbReference type="PANTHER" id="PTHR24351">
    <property type="entry name" value="RIBOSOMAL PROTEIN S6 KINASE"/>
    <property type="match status" value="1"/>
</dbReference>
<dbReference type="Pfam" id="PF00169">
    <property type="entry name" value="PH"/>
    <property type="match status" value="1"/>
</dbReference>
<dbReference type="Pfam" id="PF00069">
    <property type="entry name" value="Pkinase"/>
    <property type="match status" value="1"/>
</dbReference>
<dbReference type="Pfam" id="PF00433">
    <property type="entry name" value="Pkinase_C"/>
    <property type="match status" value="1"/>
</dbReference>
<dbReference type="SMART" id="SM00233">
    <property type="entry name" value="PH"/>
    <property type="match status" value="1"/>
</dbReference>
<dbReference type="SMART" id="SM00133">
    <property type="entry name" value="S_TK_X"/>
    <property type="match status" value="1"/>
</dbReference>
<dbReference type="SMART" id="SM00220">
    <property type="entry name" value="S_TKc"/>
    <property type="match status" value="1"/>
</dbReference>
<dbReference type="SUPFAM" id="SSF50729">
    <property type="entry name" value="PH domain-like"/>
    <property type="match status" value="1"/>
</dbReference>
<dbReference type="SUPFAM" id="SSF56112">
    <property type="entry name" value="Protein kinase-like (PK-like)"/>
    <property type="match status" value="1"/>
</dbReference>
<dbReference type="PROSITE" id="PS51285">
    <property type="entry name" value="AGC_KINASE_CTER"/>
    <property type="match status" value="1"/>
</dbReference>
<dbReference type="PROSITE" id="PS50003">
    <property type="entry name" value="PH_DOMAIN"/>
    <property type="match status" value="1"/>
</dbReference>
<dbReference type="PROSITE" id="PS00107">
    <property type="entry name" value="PROTEIN_KINASE_ATP"/>
    <property type="match status" value="1"/>
</dbReference>
<dbReference type="PROSITE" id="PS50011">
    <property type="entry name" value="PROTEIN_KINASE_DOM"/>
    <property type="match status" value="1"/>
</dbReference>
<dbReference type="PROSITE" id="PS00108">
    <property type="entry name" value="PROTEIN_KINASE_ST"/>
    <property type="match status" value="1"/>
</dbReference>
<evidence type="ECO:0000255" key="1">
    <source>
        <dbReference type="PROSITE-ProRule" id="PRU00145"/>
    </source>
</evidence>
<evidence type="ECO:0000255" key="2">
    <source>
        <dbReference type="PROSITE-ProRule" id="PRU00159"/>
    </source>
</evidence>
<evidence type="ECO:0000255" key="3">
    <source>
        <dbReference type="PROSITE-ProRule" id="PRU00618"/>
    </source>
</evidence>
<evidence type="ECO:0000255" key="4">
    <source>
        <dbReference type="PROSITE-ProRule" id="PRU10027"/>
    </source>
</evidence>
<evidence type="ECO:0000256" key="5">
    <source>
        <dbReference type="SAM" id="MobiDB-lite"/>
    </source>
</evidence>
<evidence type="ECO:0000269" key="6">
    <source>
    </source>
</evidence>
<evidence type="ECO:0000269" key="7">
    <source>
    </source>
</evidence>
<evidence type="ECO:0000269" key="8">
    <source>
    </source>
</evidence>
<evidence type="ECO:0000269" key="9">
    <source>
    </source>
</evidence>
<evidence type="ECO:0000269" key="10">
    <source>
    </source>
</evidence>
<evidence type="ECO:0000269" key="11">
    <source>
    </source>
</evidence>
<evidence type="ECO:0000269" key="12">
    <source>
    </source>
</evidence>
<evidence type="ECO:0000269" key="13">
    <source>
    </source>
</evidence>
<evidence type="ECO:0000269" key="14">
    <source>
    </source>
</evidence>
<evidence type="ECO:0000303" key="15">
    <source>
    </source>
</evidence>
<evidence type="ECO:0000305" key="16"/>
<evidence type="ECO:0000312" key="17">
    <source>
        <dbReference type="WormBase" id="F28H6.1a"/>
    </source>
</evidence>
<evidence type="ECO:0000312" key="18">
    <source>
        <dbReference type="WormBase" id="F28H6.1b"/>
    </source>
</evidence>
<organism>
    <name type="scientific">Caenorhabditis elegans</name>
    <dbReference type="NCBI Taxonomy" id="6239"/>
    <lineage>
        <taxon>Eukaryota</taxon>
        <taxon>Metazoa</taxon>
        <taxon>Ecdysozoa</taxon>
        <taxon>Nematoda</taxon>
        <taxon>Chromadorea</taxon>
        <taxon>Rhabditida</taxon>
        <taxon>Rhabditina</taxon>
        <taxon>Rhabditomorpha</taxon>
        <taxon>Rhabditoidea</taxon>
        <taxon>Rhabditidae</taxon>
        <taxon>Peloderinae</taxon>
        <taxon>Caenorhabditis</taxon>
    </lineage>
</organism>
<keyword id="KW-0025">Alternative splicing</keyword>
<keyword id="KW-0067">ATP-binding</keyword>
<keyword id="KW-0217">Developmental protein</keyword>
<keyword id="KW-0391">Immunity</keyword>
<keyword id="KW-0399">Innate immunity</keyword>
<keyword id="KW-0418">Kinase</keyword>
<keyword id="KW-0460">Magnesium</keyword>
<keyword id="KW-0479">Metal-binding</keyword>
<keyword id="KW-0547">Nucleotide-binding</keyword>
<keyword id="KW-0597">Phosphoprotein</keyword>
<keyword id="KW-1185">Reference proteome</keyword>
<keyword id="KW-0723">Serine/threonine-protein kinase</keyword>
<keyword id="KW-0808">Transferase</keyword>